<reference key="1">
    <citation type="submission" date="2004-06" db="EMBL/GenBank/DDBJ databases">
        <authorList>
            <consortium name="NIH - Xenopus Gene Collection (XGC) project"/>
        </authorList>
    </citation>
    <scope>NUCLEOTIDE SEQUENCE [LARGE SCALE MRNA]</scope>
    <source>
        <tissue>Embryo</tissue>
    </source>
</reference>
<proteinExistence type="evidence at transcript level"/>
<comment type="function">
    <text>May act as a GTPase-activating protein for Rab family protein(s).</text>
</comment>
<accession>Q6GL87</accession>
<sequence>MDEANETAQDSVPRIDGYGFVRPAEFDYAFYEEFIARYHVVLTRRAIKWSKLLQQSAAVEKNMKVKRYIRKGIPNEHRSHVWMVVSGAQAQMDMNTGYFRRMFTEGEKNPKLLDLVITDLNRTFPDNVLFQKNANPSLQKDLYNVLVAYGQHNKTVGYCQGMNFIAGYLILVTKDEEKAFWLMDALIGQILPDYYSPAMTGLKTDQEVLGDLVKKKIPSVAQLIETHGVMWTLLVSRWFICLFIDILPVETVLRIWDCLFFEGSKVIFRVALTLIKQSQASIMEARNFPDICDKFKEITKGEFVTDCHYFMQKIFAEPGSLSKTTIDKLREKQRLKLISEEK</sequence>
<protein>
    <recommendedName>
        <fullName>Growth hormone-regulated TBC protein 1</fullName>
    </recommendedName>
</protein>
<feature type="chain" id="PRO_0000288713" description="Growth hormone-regulated TBC protein 1">
    <location>
        <begin position="1"/>
        <end position="342"/>
    </location>
</feature>
<feature type="domain" description="Rab-GAP TBC" evidence="1">
    <location>
        <begin position="72"/>
        <end position="263"/>
    </location>
</feature>
<keyword id="KW-0343">GTPase activation</keyword>
<keyword id="KW-1185">Reference proteome</keyword>
<gene>
    <name type="primary">grtp1</name>
</gene>
<dbReference type="EMBL" id="BC074617">
    <property type="protein sequence ID" value="AAH74617.1"/>
    <property type="molecule type" value="mRNA"/>
</dbReference>
<dbReference type="RefSeq" id="NP_001005632.1">
    <property type="nucleotide sequence ID" value="NM_001005632.1"/>
</dbReference>
<dbReference type="SMR" id="Q6GL87"/>
<dbReference type="FunCoup" id="Q6GL87">
    <property type="interactions" value="120"/>
</dbReference>
<dbReference type="STRING" id="8364.ENSXETP00000024718"/>
<dbReference type="PaxDb" id="8364-ENSXETP00000004220"/>
<dbReference type="DNASU" id="448089"/>
<dbReference type="GeneID" id="448089"/>
<dbReference type="KEGG" id="xtr:448089"/>
<dbReference type="AGR" id="Xenbase:XB-GENE-950226"/>
<dbReference type="CTD" id="79774"/>
<dbReference type="Xenbase" id="XB-GENE-950226">
    <property type="gene designation" value="grtp1"/>
</dbReference>
<dbReference type="eggNOG" id="KOG2058">
    <property type="taxonomic scope" value="Eukaryota"/>
</dbReference>
<dbReference type="HOGENOM" id="CLU_005350_1_0_1"/>
<dbReference type="InParanoid" id="Q6GL87"/>
<dbReference type="OMA" id="DTMIQDS"/>
<dbReference type="OrthoDB" id="294251at2759"/>
<dbReference type="PhylomeDB" id="Q6GL87"/>
<dbReference type="TreeFam" id="TF105771"/>
<dbReference type="Proteomes" id="UP000008143">
    <property type="component" value="Chromosome 2"/>
</dbReference>
<dbReference type="Bgee" id="ENSXETG00000001972">
    <property type="expression patterns" value="Expressed in mesonephros and 13 other cell types or tissues"/>
</dbReference>
<dbReference type="ExpressionAtlas" id="Q6GL87">
    <property type="expression patterns" value="baseline and differential"/>
</dbReference>
<dbReference type="GO" id="GO:0005096">
    <property type="term" value="F:GTPase activator activity"/>
    <property type="evidence" value="ECO:0007669"/>
    <property type="project" value="UniProtKB-KW"/>
</dbReference>
<dbReference type="FunFam" id="1.10.10.750:FF:000014">
    <property type="entry name" value="Growth hormone-regulated TBC protein 1"/>
    <property type="match status" value="1"/>
</dbReference>
<dbReference type="FunFam" id="1.10.472.80:FF:000029">
    <property type="entry name" value="Growth hormone-regulated TBC protein 1"/>
    <property type="match status" value="1"/>
</dbReference>
<dbReference type="FunFam" id="1.10.8.270:FF:000016">
    <property type="entry name" value="TBC1 domain family member 2A"/>
    <property type="match status" value="1"/>
</dbReference>
<dbReference type="Gene3D" id="1.10.8.270">
    <property type="entry name" value="putative rabgap domain of human tbc1 domain family member 14 like domains"/>
    <property type="match status" value="1"/>
</dbReference>
<dbReference type="Gene3D" id="1.10.10.750">
    <property type="entry name" value="Ypt/Rab-GAP domain of gyp1p, domain 1"/>
    <property type="match status" value="1"/>
</dbReference>
<dbReference type="Gene3D" id="1.10.472.80">
    <property type="entry name" value="Ypt/Rab-GAP domain of gyp1p, domain 3"/>
    <property type="match status" value="1"/>
</dbReference>
<dbReference type="InterPro" id="IPR000195">
    <property type="entry name" value="Rab-GAP-TBC_dom"/>
</dbReference>
<dbReference type="InterPro" id="IPR035969">
    <property type="entry name" value="Rab-GAP_TBC_sf"/>
</dbReference>
<dbReference type="InterPro" id="IPR050302">
    <property type="entry name" value="Rab_GAP_TBC_domain"/>
</dbReference>
<dbReference type="PANTHER" id="PTHR47219:SF10">
    <property type="entry name" value="GROWTH HORMONE-REGULATED TBC PROTEIN 1"/>
    <property type="match status" value="1"/>
</dbReference>
<dbReference type="PANTHER" id="PTHR47219">
    <property type="entry name" value="RAB GTPASE-ACTIVATING PROTEIN 1-LIKE"/>
    <property type="match status" value="1"/>
</dbReference>
<dbReference type="Pfam" id="PF00566">
    <property type="entry name" value="RabGAP-TBC"/>
    <property type="match status" value="1"/>
</dbReference>
<dbReference type="SMART" id="SM00164">
    <property type="entry name" value="TBC"/>
    <property type="match status" value="1"/>
</dbReference>
<dbReference type="SUPFAM" id="SSF47923">
    <property type="entry name" value="Ypt/Rab-GAP domain of gyp1p"/>
    <property type="match status" value="2"/>
</dbReference>
<dbReference type="PROSITE" id="PS50086">
    <property type="entry name" value="TBC_RABGAP"/>
    <property type="match status" value="1"/>
</dbReference>
<name>GRTP1_XENTR</name>
<organism>
    <name type="scientific">Xenopus tropicalis</name>
    <name type="common">Western clawed frog</name>
    <name type="synonym">Silurana tropicalis</name>
    <dbReference type="NCBI Taxonomy" id="8364"/>
    <lineage>
        <taxon>Eukaryota</taxon>
        <taxon>Metazoa</taxon>
        <taxon>Chordata</taxon>
        <taxon>Craniata</taxon>
        <taxon>Vertebrata</taxon>
        <taxon>Euteleostomi</taxon>
        <taxon>Amphibia</taxon>
        <taxon>Batrachia</taxon>
        <taxon>Anura</taxon>
        <taxon>Pipoidea</taxon>
        <taxon>Pipidae</taxon>
        <taxon>Xenopodinae</taxon>
        <taxon>Xenopus</taxon>
        <taxon>Silurana</taxon>
    </lineage>
</organism>
<evidence type="ECO:0000255" key="1">
    <source>
        <dbReference type="PROSITE-ProRule" id="PRU00163"/>
    </source>
</evidence>